<evidence type="ECO:0000255" key="1">
    <source>
        <dbReference type="HAMAP-Rule" id="MF_00004"/>
    </source>
</evidence>
<reference key="1">
    <citation type="journal article" date="2008" name="BMC Genomics">
        <title>The genome sequence of the fish pathogen Aliivibrio salmonicida strain LFI1238 shows extensive evidence of gene decay.</title>
        <authorList>
            <person name="Hjerde E."/>
            <person name="Lorentzen M.S."/>
            <person name="Holden M.T."/>
            <person name="Seeger K."/>
            <person name="Paulsen S."/>
            <person name="Bason N."/>
            <person name="Churcher C."/>
            <person name="Harris D."/>
            <person name="Norbertczak H."/>
            <person name="Quail M.A."/>
            <person name="Sanders S."/>
            <person name="Thurston S."/>
            <person name="Parkhill J."/>
            <person name="Willassen N.P."/>
            <person name="Thomson N.R."/>
        </authorList>
    </citation>
    <scope>NUCLEOTIDE SEQUENCE [LARGE SCALE GENOMIC DNA]</scope>
    <source>
        <strain>LFI1238</strain>
    </source>
</reference>
<feature type="chain" id="PRO_1000088951" description="Adenine phosphoribosyltransferase">
    <location>
        <begin position="1"/>
        <end position="181"/>
    </location>
</feature>
<name>APT_ALISL</name>
<comment type="function">
    <text evidence="1">Catalyzes a salvage reaction resulting in the formation of AMP, that is energically less costly than de novo synthesis.</text>
</comment>
<comment type="catalytic activity">
    <reaction evidence="1">
        <text>AMP + diphosphate = 5-phospho-alpha-D-ribose 1-diphosphate + adenine</text>
        <dbReference type="Rhea" id="RHEA:16609"/>
        <dbReference type="ChEBI" id="CHEBI:16708"/>
        <dbReference type="ChEBI" id="CHEBI:33019"/>
        <dbReference type="ChEBI" id="CHEBI:58017"/>
        <dbReference type="ChEBI" id="CHEBI:456215"/>
        <dbReference type="EC" id="2.4.2.7"/>
    </reaction>
</comment>
<comment type="pathway">
    <text evidence="1">Purine metabolism; AMP biosynthesis via salvage pathway; AMP from adenine: step 1/1.</text>
</comment>
<comment type="subunit">
    <text evidence="1">Homodimer.</text>
</comment>
<comment type="subcellular location">
    <subcellularLocation>
        <location evidence="1">Cytoplasm</location>
    </subcellularLocation>
</comment>
<comment type="similarity">
    <text evidence="1">Belongs to the purine/pyrimidine phosphoribosyltransferase family.</text>
</comment>
<dbReference type="EC" id="2.4.2.7" evidence="1"/>
<dbReference type="EMBL" id="FM178379">
    <property type="protein sequence ID" value="CAQ78769.1"/>
    <property type="molecule type" value="Genomic_DNA"/>
</dbReference>
<dbReference type="RefSeq" id="WP_012549839.1">
    <property type="nucleotide sequence ID" value="NC_011312.1"/>
</dbReference>
<dbReference type="SMR" id="B6EJ41"/>
<dbReference type="KEGG" id="vsa:VSAL_I1084"/>
<dbReference type="eggNOG" id="COG0503">
    <property type="taxonomic scope" value="Bacteria"/>
</dbReference>
<dbReference type="HOGENOM" id="CLU_063339_3_0_6"/>
<dbReference type="UniPathway" id="UPA00588">
    <property type="reaction ID" value="UER00646"/>
</dbReference>
<dbReference type="Proteomes" id="UP000001730">
    <property type="component" value="Chromosome 1"/>
</dbReference>
<dbReference type="GO" id="GO:0005737">
    <property type="term" value="C:cytoplasm"/>
    <property type="evidence" value="ECO:0007669"/>
    <property type="project" value="UniProtKB-SubCell"/>
</dbReference>
<dbReference type="GO" id="GO:0002055">
    <property type="term" value="F:adenine binding"/>
    <property type="evidence" value="ECO:0007669"/>
    <property type="project" value="TreeGrafter"/>
</dbReference>
<dbReference type="GO" id="GO:0003999">
    <property type="term" value="F:adenine phosphoribosyltransferase activity"/>
    <property type="evidence" value="ECO:0007669"/>
    <property type="project" value="UniProtKB-UniRule"/>
</dbReference>
<dbReference type="GO" id="GO:0016208">
    <property type="term" value="F:AMP binding"/>
    <property type="evidence" value="ECO:0007669"/>
    <property type="project" value="TreeGrafter"/>
</dbReference>
<dbReference type="GO" id="GO:0006168">
    <property type="term" value="P:adenine salvage"/>
    <property type="evidence" value="ECO:0007669"/>
    <property type="project" value="InterPro"/>
</dbReference>
<dbReference type="GO" id="GO:0044209">
    <property type="term" value="P:AMP salvage"/>
    <property type="evidence" value="ECO:0007669"/>
    <property type="project" value="UniProtKB-UniRule"/>
</dbReference>
<dbReference type="GO" id="GO:0006166">
    <property type="term" value="P:purine ribonucleoside salvage"/>
    <property type="evidence" value="ECO:0007669"/>
    <property type="project" value="UniProtKB-KW"/>
</dbReference>
<dbReference type="CDD" id="cd06223">
    <property type="entry name" value="PRTases_typeI"/>
    <property type="match status" value="1"/>
</dbReference>
<dbReference type="FunFam" id="3.40.50.2020:FF:000004">
    <property type="entry name" value="Adenine phosphoribosyltransferase"/>
    <property type="match status" value="1"/>
</dbReference>
<dbReference type="Gene3D" id="3.40.50.2020">
    <property type="match status" value="1"/>
</dbReference>
<dbReference type="HAMAP" id="MF_00004">
    <property type="entry name" value="Aden_phosphoribosyltr"/>
    <property type="match status" value="1"/>
</dbReference>
<dbReference type="InterPro" id="IPR005764">
    <property type="entry name" value="Ade_phspho_trans"/>
</dbReference>
<dbReference type="InterPro" id="IPR000836">
    <property type="entry name" value="PRibTrfase_dom"/>
</dbReference>
<dbReference type="InterPro" id="IPR029057">
    <property type="entry name" value="PRTase-like"/>
</dbReference>
<dbReference type="InterPro" id="IPR050054">
    <property type="entry name" value="UPRTase/APRTase"/>
</dbReference>
<dbReference type="NCBIfam" id="TIGR01090">
    <property type="entry name" value="apt"/>
    <property type="match status" value="1"/>
</dbReference>
<dbReference type="NCBIfam" id="NF002632">
    <property type="entry name" value="PRK02304.1-1"/>
    <property type="match status" value="1"/>
</dbReference>
<dbReference type="NCBIfam" id="NF002634">
    <property type="entry name" value="PRK02304.1-3"/>
    <property type="match status" value="1"/>
</dbReference>
<dbReference type="NCBIfam" id="NF002636">
    <property type="entry name" value="PRK02304.1-5"/>
    <property type="match status" value="1"/>
</dbReference>
<dbReference type="PANTHER" id="PTHR32315">
    <property type="entry name" value="ADENINE PHOSPHORIBOSYLTRANSFERASE"/>
    <property type="match status" value="1"/>
</dbReference>
<dbReference type="PANTHER" id="PTHR32315:SF3">
    <property type="entry name" value="ADENINE PHOSPHORIBOSYLTRANSFERASE"/>
    <property type="match status" value="1"/>
</dbReference>
<dbReference type="Pfam" id="PF00156">
    <property type="entry name" value="Pribosyltran"/>
    <property type="match status" value="1"/>
</dbReference>
<dbReference type="SUPFAM" id="SSF53271">
    <property type="entry name" value="PRTase-like"/>
    <property type="match status" value="1"/>
</dbReference>
<dbReference type="PROSITE" id="PS00103">
    <property type="entry name" value="PUR_PYR_PR_TRANSFER"/>
    <property type="match status" value="1"/>
</dbReference>
<accession>B6EJ41</accession>
<protein>
    <recommendedName>
        <fullName evidence="1">Adenine phosphoribosyltransferase</fullName>
        <shortName evidence="1">APRT</shortName>
        <ecNumber evidence="1">2.4.2.7</ecNumber>
    </recommendedName>
</protein>
<keyword id="KW-0963">Cytoplasm</keyword>
<keyword id="KW-0328">Glycosyltransferase</keyword>
<keyword id="KW-0660">Purine salvage</keyword>
<keyword id="KW-0808">Transferase</keyword>
<proteinExistence type="inferred from homology"/>
<sequence>MSTETLELIKNSIKSVPDYPKAGIMFRDVTSLMEDPKAYQATIQLLVEKYKQGGFTKIVGTEARGFLFGAPLALELGVGFVPVRKPGKLPRPTIAQTYDLEYGTDTLEIHTDAIVEGDKVLVVDDLLATGGTIEATVKLIRQLGGDVQHAAFVINLPEIGGETRLEGLGLNVYSICEFPGH</sequence>
<gene>
    <name evidence="1" type="primary">apt</name>
    <name type="ordered locus">VSAL_I1084</name>
</gene>
<organism>
    <name type="scientific">Aliivibrio salmonicida (strain LFI1238)</name>
    <name type="common">Vibrio salmonicida (strain LFI1238)</name>
    <dbReference type="NCBI Taxonomy" id="316275"/>
    <lineage>
        <taxon>Bacteria</taxon>
        <taxon>Pseudomonadati</taxon>
        <taxon>Pseudomonadota</taxon>
        <taxon>Gammaproteobacteria</taxon>
        <taxon>Vibrionales</taxon>
        <taxon>Vibrionaceae</taxon>
        <taxon>Aliivibrio</taxon>
    </lineage>
</organism>